<name>DCUP_SHEPW</name>
<gene>
    <name evidence="1" type="primary">hemE</name>
    <name type="ordered locus">swp_4737</name>
</gene>
<sequence length="354" mass="39523">MAELKNDRYLRALLKQPVDRTPVWMMRQAGRYLPEYKATRAEAGDFMSLCKNQDLACEVTLQPLRRYDLDAAILFSDILTVPDAMGLGLYFETGEGPRFERPTDTIDSIKKLCIPDPEDELGYVMRAVSTIRRELKGEVPLIGFSGSPWTLATYMVEGGSSKTFEKIKKMAYEEPATLHMLLDKLADSVILYLNAQVANGAQSLMIFDSWGGALSHHAYREFSLRYMQKIVDGLTRHADGRQVPVTLFTKGGGLWLESMAETGCDALGLDWTVDIGDARRRVGNKVALQGNMDPSVLYASPERIHQEVEQILSSYGEGTGHVFNLGHGIHQHVNPEHAGSFINSVHELSGKYHK</sequence>
<evidence type="ECO:0000255" key="1">
    <source>
        <dbReference type="HAMAP-Rule" id="MF_00218"/>
    </source>
</evidence>
<feature type="chain" id="PRO_1000197539" description="Uroporphyrinogen decarboxylase">
    <location>
        <begin position="1"/>
        <end position="354"/>
    </location>
</feature>
<feature type="binding site" evidence="1">
    <location>
        <begin position="27"/>
        <end position="31"/>
    </location>
    <ligand>
        <name>substrate</name>
    </ligand>
</feature>
<feature type="binding site" evidence="1">
    <location>
        <position position="77"/>
    </location>
    <ligand>
        <name>substrate</name>
    </ligand>
</feature>
<feature type="binding site" evidence="1">
    <location>
        <position position="154"/>
    </location>
    <ligand>
        <name>substrate</name>
    </ligand>
</feature>
<feature type="binding site" evidence="1">
    <location>
        <position position="209"/>
    </location>
    <ligand>
        <name>substrate</name>
    </ligand>
</feature>
<feature type="binding site" evidence="1">
    <location>
        <position position="327"/>
    </location>
    <ligand>
        <name>substrate</name>
    </ligand>
</feature>
<feature type="site" description="Transition state stabilizer" evidence="1">
    <location>
        <position position="77"/>
    </location>
</feature>
<organism>
    <name type="scientific">Shewanella piezotolerans (strain WP3 / JCM 13877)</name>
    <dbReference type="NCBI Taxonomy" id="225849"/>
    <lineage>
        <taxon>Bacteria</taxon>
        <taxon>Pseudomonadati</taxon>
        <taxon>Pseudomonadota</taxon>
        <taxon>Gammaproteobacteria</taxon>
        <taxon>Alteromonadales</taxon>
        <taxon>Shewanellaceae</taxon>
        <taxon>Shewanella</taxon>
    </lineage>
</organism>
<accession>B8CTX5</accession>
<proteinExistence type="inferred from homology"/>
<comment type="function">
    <text evidence="1">Catalyzes the decarboxylation of four acetate groups of uroporphyrinogen-III to yield coproporphyrinogen-III.</text>
</comment>
<comment type="catalytic activity">
    <reaction evidence="1">
        <text>uroporphyrinogen III + 4 H(+) = coproporphyrinogen III + 4 CO2</text>
        <dbReference type="Rhea" id="RHEA:19865"/>
        <dbReference type="ChEBI" id="CHEBI:15378"/>
        <dbReference type="ChEBI" id="CHEBI:16526"/>
        <dbReference type="ChEBI" id="CHEBI:57308"/>
        <dbReference type="ChEBI" id="CHEBI:57309"/>
        <dbReference type="EC" id="4.1.1.37"/>
    </reaction>
</comment>
<comment type="pathway">
    <text evidence="1">Porphyrin-containing compound metabolism; protoporphyrin-IX biosynthesis; coproporphyrinogen-III from 5-aminolevulinate: step 4/4.</text>
</comment>
<comment type="subunit">
    <text evidence="1">Homodimer.</text>
</comment>
<comment type="subcellular location">
    <subcellularLocation>
        <location evidence="1">Cytoplasm</location>
    </subcellularLocation>
</comment>
<comment type="similarity">
    <text evidence="1">Belongs to the uroporphyrinogen decarboxylase family.</text>
</comment>
<keyword id="KW-0963">Cytoplasm</keyword>
<keyword id="KW-0210">Decarboxylase</keyword>
<keyword id="KW-0456">Lyase</keyword>
<keyword id="KW-0627">Porphyrin biosynthesis</keyword>
<reference key="1">
    <citation type="journal article" date="2008" name="PLoS ONE">
        <title>Environmental adaptation: genomic analysis of the piezotolerant and psychrotolerant deep-sea iron reducing bacterium Shewanella piezotolerans WP3.</title>
        <authorList>
            <person name="Wang F."/>
            <person name="Wang J."/>
            <person name="Jian H."/>
            <person name="Zhang B."/>
            <person name="Li S."/>
            <person name="Wang F."/>
            <person name="Zeng X."/>
            <person name="Gao L."/>
            <person name="Bartlett D.H."/>
            <person name="Yu J."/>
            <person name="Hu S."/>
            <person name="Xiao X."/>
        </authorList>
    </citation>
    <scope>NUCLEOTIDE SEQUENCE [LARGE SCALE GENOMIC DNA]</scope>
    <source>
        <strain>WP3 / JCM 13877</strain>
    </source>
</reference>
<protein>
    <recommendedName>
        <fullName evidence="1">Uroporphyrinogen decarboxylase</fullName>
        <shortName evidence="1">UPD</shortName>
        <shortName evidence="1">URO-D</shortName>
        <ecNumber evidence="1">4.1.1.37</ecNumber>
    </recommendedName>
</protein>
<dbReference type="EC" id="4.1.1.37" evidence="1"/>
<dbReference type="EMBL" id="CP000472">
    <property type="protein sequence ID" value="ACJ31369.1"/>
    <property type="molecule type" value="Genomic_DNA"/>
</dbReference>
<dbReference type="RefSeq" id="WP_020914699.1">
    <property type="nucleotide sequence ID" value="NC_011566.1"/>
</dbReference>
<dbReference type="SMR" id="B8CTX5"/>
<dbReference type="STRING" id="225849.swp_4737"/>
<dbReference type="KEGG" id="swp:swp_4737"/>
<dbReference type="eggNOG" id="COG0407">
    <property type="taxonomic scope" value="Bacteria"/>
</dbReference>
<dbReference type="HOGENOM" id="CLU_040933_0_0_6"/>
<dbReference type="OrthoDB" id="9806656at2"/>
<dbReference type="UniPathway" id="UPA00251">
    <property type="reaction ID" value="UER00321"/>
</dbReference>
<dbReference type="Proteomes" id="UP000000753">
    <property type="component" value="Chromosome"/>
</dbReference>
<dbReference type="GO" id="GO:0005829">
    <property type="term" value="C:cytosol"/>
    <property type="evidence" value="ECO:0007669"/>
    <property type="project" value="TreeGrafter"/>
</dbReference>
<dbReference type="GO" id="GO:0004853">
    <property type="term" value="F:uroporphyrinogen decarboxylase activity"/>
    <property type="evidence" value="ECO:0007669"/>
    <property type="project" value="UniProtKB-UniRule"/>
</dbReference>
<dbReference type="GO" id="GO:0019353">
    <property type="term" value="P:protoporphyrinogen IX biosynthetic process from glutamate"/>
    <property type="evidence" value="ECO:0007669"/>
    <property type="project" value="TreeGrafter"/>
</dbReference>
<dbReference type="CDD" id="cd00717">
    <property type="entry name" value="URO-D"/>
    <property type="match status" value="1"/>
</dbReference>
<dbReference type="FunFam" id="3.20.20.210:FF:000001">
    <property type="entry name" value="Uroporphyrinogen decarboxylase"/>
    <property type="match status" value="1"/>
</dbReference>
<dbReference type="Gene3D" id="3.20.20.210">
    <property type="match status" value="1"/>
</dbReference>
<dbReference type="HAMAP" id="MF_00218">
    <property type="entry name" value="URO_D"/>
    <property type="match status" value="1"/>
</dbReference>
<dbReference type="InterPro" id="IPR038071">
    <property type="entry name" value="UROD/MetE-like_sf"/>
</dbReference>
<dbReference type="InterPro" id="IPR006361">
    <property type="entry name" value="Uroporphyrinogen_deCO2ase_HemE"/>
</dbReference>
<dbReference type="InterPro" id="IPR000257">
    <property type="entry name" value="Uroporphyrinogen_deCOase"/>
</dbReference>
<dbReference type="NCBIfam" id="TIGR01464">
    <property type="entry name" value="hemE"/>
    <property type="match status" value="1"/>
</dbReference>
<dbReference type="PANTHER" id="PTHR21091">
    <property type="entry name" value="METHYLTETRAHYDROFOLATE:HOMOCYSTEINE METHYLTRANSFERASE RELATED"/>
    <property type="match status" value="1"/>
</dbReference>
<dbReference type="PANTHER" id="PTHR21091:SF169">
    <property type="entry name" value="UROPORPHYRINOGEN DECARBOXYLASE"/>
    <property type="match status" value="1"/>
</dbReference>
<dbReference type="Pfam" id="PF01208">
    <property type="entry name" value="URO-D"/>
    <property type="match status" value="1"/>
</dbReference>
<dbReference type="SUPFAM" id="SSF51726">
    <property type="entry name" value="UROD/MetE-like"/>
    <property type="match status" value="1"/>
</dbReference>
<dbReference type="PROSITE" id="PS00906">
    <property type="entry name" value="UROD_1"/>
    <property type="match status" value="1"/>
</dbReference>
<dbReference type="PROSITE" id="PS00907">
    <property type="entry name" value="UROD_2"/>
    <property type="match status" value="1"/>
</dbReference>